<name>DDL_ACTP2</name>
<sequence length="303" mass="32704">MSIKDEKIAVLFGGVSQEREVSLNSGAAVTEALKSLGYNVEGIDTKDFPIEKLKEKGIQRVFNILHGGIGENGVLQGALEQMGIPYTGCGVMASAVTLDKFRTKLMWQAVGLPTADMVVVRRGEAVDSEQIIAKLGLPVFVKPSSEGSSVGVTKVKTVEQLLPAVEEALKFDSIVLVEAFLAGKEYSVPVLDGQVLPAVQIIPEGEFYDYHAKYISDNTQYLVPALSDDRQAEVAELVKAAYEVVGCRGWSRIDVMEDANGHFNLVEVNTCPGMTSHSIFPKSAATVGIPFEKLVERVLELSA</sequence>
<evidence type="ECO:0000250" key="1"/>
<evidence type="ECO:0000255" key="2">
    <source>
        <dbReference type="HAMAP-Rule" id="MF_00047"/>
    </source>
</evidence>
<reference key="1">
    <citation type="journal article" date="2008" name="J. Bacteriol.">
        <title>The complete genome sequence of Actinobacillus pleuropneumoniae L20 (serotype 5b).</title>
        <authorList>
            <person name="Foote S.J."/>
            <person name="Bosse J.T."/>
            <person name="Bouevitch A.B."/>
            <person name="Langford P.R."/>
            <person name="Young N.M."/>
            <person name="Nash J.H.E."/>
        </authorList>
    </citation>
    <scope>NUCLEOTIDE SEQUENCE [LARGE SCALE GENOMIC DNA]</scope>
    <source>
        <strain>L20</strain>
    </source>
</reference>
<gene>
    <name evidence="2" type="primary">ddl</name>
    <name type="ordered locus">APL_0020</name>
</gene>
<feature type="chain" id="PRO_1000030421" description="D-alanine--D-alanine ligase">
    <location>
        <begin position="1"/>
        <end position="303"/>
    </location>
</feature>
<feature type="domain" description="ATP-grasp" evidence="2">
    <location>
        <begin position="104"/>
        <end position="300"/>
    </location>
</feature>
<feature type="binding site" evidence="2">
    <location>
        <begin position="132"/>
        <end position="187"/>
    </location>
    <ligand>
        <name>ATP</name>
        <dbReference type="ChEBI" id="CHEBI:30616"/>
    </ligand>
</feature>
<feature type="binding site" evidence="2">
    <location>
        <position position="254"/>
    </location>
    <ligand>
        <name>Mg(2+)</name>
        <dbReference type="ChEBI" id="CHEBI:18420"/>
        <label>1</label>
    </ligand>
</feature>
<feature type="binding site" evidence="2">
    <location>
        <position position="267"/>
    </location>
    <ligand>
        <name>Mg(2+)</name>
        <dbReference type="ChEBI" id="CHEBI:18420"/>
        <label>1</label>
    </ligand>
</feature>
<feature type="binding site" evidence="2">
    <location>
        <position position="267"/>
    </location>
    <ligand>
        <name>Mg(2+)</name>
        <dbReference type="ChEBI" id="CHEBI:18420"/>
        <label>2</label>
    </ligand>
</feature>
<feature type="binding site" evidence="2">
    <location>
        <position position="269"/>
    </location>
    <ligand>
        <name>Mg(2+)</name>
        <dbReference type="ChEBI" id="CHEBI:18420"/>
        <label>2</label>
    </ligand>
</feature>
<dbReference type="EC" id="6.3.2.4" evidence="2"/>
<dbReference type="EMBL" id="CP000569">
    <property type="protein sequence ID" value="ABN73128.1"/>
    <property type="molecule type" value="Genomic_DNA"/>
</dbReference>
<dbReference type="RefSeq" id="WP_005595616.1">
    <property type="nucleotide sequence ID" value="NC_009053.1"/>
</dbReference>
<dbReference type="SMR" id="A3MY92"/>
<dbReference type="STRING" id="416269.APL_0020"/>
<dbReference type="EnsemblBacteria" id="ABN73128">
    <property type="protein sequence ID" value="ABN73128"/>
    <property type="gene ID" value="APL_0020"/>
</dbReference>
<dbReference type="KEGG" id="apl:APL_0020"/>
<dbReference type="eggNOG" id="COG1181">
    <property type="taxonomic scope" value="Bacteria"/>
</dbReference>
<dbReference type="HOGENOM" id="CLU_039268_1_2_6"/>
<dbReference type="UniPathway" id="UPA00219"/>
<dbReference type="Proteomes" id="UP000001432">
    <property type="component" value="Chromosome"/>
</dbReference>
<dbReference type="GO" id="GO:0005829">
    <property type="term" value="C:cytosol"/>
    <property type="evidence" value="ECO:0007669"/>
    <property type="project" value="TreeGrafter"/>
</dbReference>
<dbReference type="GO" id="GO:0005524">
    <property type="term" value="F:ATP binding"/>
    <property type="evidence" value="ECO:0007669"/>
    <property type="project" value="UniProtKB-KW"/>
</dbReference>
<dbReference type="GO" id="GO:0008716">
    <property type="term" value="F:D-alanine-D-alanine ligase activity"/>
    <property type="evidence" value="ECO:0007669"/>
    <property type="project" value="UniProtKB-UniRule"/>
</dbReference>
<dbReference type="GO" id="GO:0046872">
    <property type="term" value="F:metal ion binding"/>
    <property type="evidence" value="ECO:0007669"/>
    <property type="project" value="UniProtKB-KW"/>
</dbReference>
<dbReference type="GO" id="GO:0071555">
    <property type="term" value="P:cell wall organization"/>
    <property type="evidence" value="ECO:0007669"/>
    <property type="project" value="UniProtKB-KW"/>
</dbReference>
<dbReference type="GO" id="GO:0009252">
    <property type="term" value="P:peptidoglycan biosynthetic process"/>
    <property type="evidence" value="ECO:0007669"/>
    <property type="project" value="UniProtKB-UniRule"/>
</dbReference>
<dbReference type="GO" id="GO:0008360">
    <property type="term" value="P:regulation of cell shape"/>
    <property type="evidence" value="ECO:0007669"/>
    <property type="project" value="UniProtKB-KW"/>
</dbReference>
<dbReference type="FunFam" id="3.30.1490.20:FF:000007">
    <property type="entry name" value="D-alanine--D-alanine ligase"/>
    <property type="match status" value="1"/>
</dbReference>
<dbReference type="FunFam" id="3.30.470.20:FF:000008">
    <property type="entry name" value="D-alanine--D-alanine ligase"/>
    <property type="match status" value="1"/>
</dbReference>
<dbReference type="FunFam" id="3.40.50.20:FF:000013">
    <property type="entry name" value="D-alanine--D-alanine ligase"/>
    <property type="match status" value="1"/>
</dbReference>
<dbReference type="Gene3D" id="3.40.50.20">
    <property type="match status" value="1"/>
</dbReference>
<dbReference type="Gene3D" id="3.30.1490.20">
    <property type="entry name" value="ATP-grasp fold, A domain"/>
    <property type="match status" value="1"/>
</dbReference>
<dbReference type="Gene3D" id="3.30.470.20">
    <property type="entry name" value="ATP-grasp fold, B domain"/>
    <property type="match status" value="1"/>
</dbReference>
<dbReference type="HAMAP" id="MF_00047">
    <property type="entry name" value="Dala_Dala_lig"/>
    <property type="match status" value="1"/>
</dbReference>
<dbReference type="InterPro" id="IPR011761">
    <property type="entry name" value="ATP-grasp"/>
</dbReference>
<dbReference type="InterPro" id="IPR013815">
    <property type="entry name" value="ATP_grasp_subdomain_1"/>
</dbReference>
<dbReference type="InterPro" id="IPR000291">
    <property type="entry name" value="D-Ala_lig_Van_CS"/>
</dbReference>
<dbReference type="InterPro" id="IPR005905">
    <property type="entry name" value="D_ala_D_ala"/>
</dbReference>
<dbReference type="InterPro" id="IPR011095">
    <property type="entry name" value="Dala_Dala_lig_C"/>
</dbReference>
<dbReference type="InterPro" id="IPR011127">
    <property type="entry name" value="Dala_Dala_lig_N"/>
</dbReference>
<dbReference type="InterPro" id="IPR016185">
    <property type="entry name" value="PreATP-grasp_dom_sf"/>
</dbReference>
<dbReference type="NCBIfam" id="TIGR01205">
    <property type="entry name" value="D_ala_D_alaTIGR"/>
    <property type="match status" value="1"/>
</dbReference>
<dbReference type="NCBIfam" id="NF002378">
    <property type="entry name" value="PRK01372.1"/>
    <property type="match status" value="1"/>
</dbReference>
<dbReference type="PANTHER" id="PTHR23132">
    <property type="entry name" value="D-ALANINE--D-ALANINE LIGASE"/>
    <property type="match status" value="1"/>
</dbReference>
<dbReference type="PANTHER" id="PTHR23132:SF23">
    <property type="entry name" value="D-ALANINE--D-ALANINE LIGASE B"/>
    <property type="match status" value="1"/>
</dbReference>
<dbReference type="Pfam" id="PF07478">
    <property type="entry name" value="Dala_Dala_lig_C"/>
    <property type="match status" value="1"/>
</dbReference>
<dbReference type="Pfam" id="PF01820">
    <property type="entry name" value="Dala_Dala_lig_N"/>
    <property type="match status" value="1"/>
</dbReference>
<dbReference type="PIRSF" id="PIRSF039102">
    <property type="entry name" value="Ddl/VanB"/>
    <property type="match status" value="1"/>
</dbReference>
<dbReference type="SUPFAM" id="SSF56059">
    <property type="entry name" value="Glutathione synthetase ATP-binding domain-like"/>
    <property type="match status" value="1"/>
</dbReference>
<dbReference type="SUPFAM" id="SSF52440">
    <property type="entry name" value="PreATP-grasp domain"/>
    <property type="match status" value="1"/>
</dbReference>
<dbReference type="PROSITE" id="PS50975">
    <property type="entry name" value="ATP_GRASP"/>
    <property type="match status" value="1"/>
</dbReference>
<dbReference type="PROSITE" id="PS00843">
    <property type="entry name" value="DALA_DALA_LIGASE_1"/>
    <property type="match status" value="1"/>
</dbReference>
<dbReference type="PROSITE" id="PS00844">
    <property type="entry name" value="DALA_DALA_LIGASE_2"/>
    <property type="match status" value="1"/>
</dbReference>
<keyword id="KW-0067">ATP-binding</keyword>
<keyword id="KW-0133">Cell shape</keyword>
<keyword id="KW-0961">Cell wall biogenesis/degradation</keyword>
<keyword id="KW-0963">Cytoplasm</keyword>
<keyword id="KW-0436">Ligase</keyword>
<keyword id="KW-0460">Magnesium</keyword>
<keyword id="KW-0464">Manganese</keyword>
<keyword id="KW-0479">Metal-binding</keyword>
<keyword id="KW-0547">Nucleotide-binding</keyword>
<keyword id="KW-0573">Peptidoglycan synthesis</keyword>
<keyword id="KW-1185">Reference proteome</keyword>
<accession>A3MY92</accession>
<protein>
    <recommendedName>
        <fullName evidence="2">D-alanine--D-alanine ligase</fullName>
        <ecNumber evidence="2">6.3.2.4</ecNumber>
    </recommendedName>
    <alternativeName>
        <fullName evidence="2">D-Ala-D-Ala ligase</fullName>
    </alternativeName>
    <alternativeName>
        <fullName evidence="2">D-alanylalanine synthetase</fullName>
    </alternativeName>
</protein>
<proteinExistence type="inferred from homology"/>
<comment type="function">
    <text evidence="2">Cell wall formation.</text>
</comment>
<comment type="catalytic activity">
    <reaction evidence="2">
        <text>2 D-alanine + ATP = D-alanyl-D-alanine + ADP + phosphate + H(+)</text>
        <dbReference type="Rhea" id="RHEA:11224"/>
        <dbReference type="ChEBI" id="CHEBI:15378"/>
        <dbReference type="ChEBI" id="CHEBI:30616"/>
        <dbReference type="ChEBI" id="CHEBI:43474"/>
        <dbReference type="ChEBI" id="CHEBI:57416"/>
        <dbReference type="ChEBI" id="CHEBI:57822"/>
        <dbReference type="ChEBI" id="CHEBI:456216"/>
        <dbReference type="EC" id="6.3.2.4"/>
    </reaction>
</comment>
<comment type="cofactor">
    <cofactor evidence="1">
        <name>Mg(2+)</name>
        <dbReference type="ChEBI" id="CHEBI:18420"/>
    </cofactor>
    <cofactor evidence="1">
        <name>Mn(2+)</name>
        <dbReference type="ChEBI" id="CHEBI:29035"/>
    </cofactor>
    <text evidence="1">Binds 2 magnesium or manganese ions per subunit.</text>
</comment>
<comment type="pathway">
    <text evidence="2">Cell wall biogenesis; peptidoglycan biosynthesis.</text>
</comment>
<comment type="subcellular location">
    <subcellularLocation>
        <location evidence="2">Cytoplasm</location>
    </subcellularLocation>
</comment>
<comment type="similarity">
    <text evidence="2">Belongs to the D-alanine--D-alanine ligase family.</text>
</comment>
<organism>
    <name type="scientific">Actinobacillus pleuropneumoniae serotype 5b (strain L20)</name>
    <dbReference type="NCBI Taxonomy" id="416269"/>
    <lineage>
        <taxon>Bacteria</taxon>
        <taxon>Pseudomonadati</taxon>
        <taxon>Pseudomonadota</taxon>
        <taxon>Gammaproteobacteria</taxon>
        <taxon>Pasteurellales</taxon>
        <taxon>Pasteurellaceae</taxon>
        <taxon>Actinobacillus</taxon>
    </lineage>
</organism>